<name>CYSN_BACTN</name>
<gene>
    <name evidence="2" type="primary">cysN</name>
    <name type="ordered locus">BT_0415</name>
</gene>
<proteinExistence type="inferred from homology"/>
<keyword id="KW-0067">ATP-binding</keyword>
<keyword id="KW-0342">GTP-binding</keyword>
<keyword id="KW-0547">Nucleotide-binding</keyword>
<keyword id="KW-0548">Nucleotidyltransferase</keyword>
<keyword id="KW-1185">Reference proteome</keyword>
<keyword id="KW-0808">Transferase</keyword>
<reference key="1">
    <citation type="journal article" date="2003" name="Science">
        <title>A genomic view of the human-Bacteroides thetaiotaomicron symbiosis.</title>
        <authorList>
            <person name="Xu J."/>
            <person name="Bjursell M.K."/>
            <person name="Himrod J."/>
            <person name="Deng S."/>
            <person name="Carmichael L.K."/>
            <person name="Chiang H.C."/>
            <person name="Hooper L.V."/>
            <person name="Gordon J.I."/>
        </authorList>
    </citation>
    <scope>NUCLEOTIDE SEQUENCE [LARGE SCALE GENOMIC DNA]</scope>
    <source>
        <strain>ATCC 29148 / DSM 2079 / JCM 5827 / CCUG 10774 / NCTC 10582 / VPI-5482 / E50</strain>
    </source>
</reference>
<accession>Q8AAP9</accession>
<dbReference type="EC" id="2.7.7.4" evidence="2"/>
<dbReference type="EMBL" id="AE015928">
    <property type="protein sequence ID" value="AAO75522.1"/>
    <property type="molecule type" value="Genomic_DNA"/>
</dbReference>
<dbReference type="RefSeq" id="NP_809328.1">
    <property type="nucleotide sequence ID" value="NC_004663.1"/>
</dbReference>
<dbReference type="RefSeq" id="WP_011107258.1">
    <property type="nucleotide sequence ID" value="NC_004663.1"/>
</dbReference>
<dbReference type="SMR" id="Q8AAP9"/>
<dbReference type="FunCoup" id="Q8AAP9">
    <property type="interactions" value="333"/>
</dbReference>
<dbReference type="STRING" id="226186.BT_0415"/>
<dbReference type="PaxDb" id="226186-BT_0415"/>
<dbReference type="EnsemblBacteria" id="AAO75522">
    <property type="protein sequence ID" value="AAO75522"/>
    <property type="gene ID" value="BT_0415"/>
</dbReference>
<dbReference type="GeneID" id="60926373"/>
<dbReference type="KEGG" id="bth:BT_0415"/>
<dbReference type="PATRIC" id="fig|226186.12.peg.413"/>
<dbReference type="eggNOG" id="COG2895">
    <property type="taxonomic scope" value="Bacteria"/>
</dbReference>
<dbReference type="HOGENOM" id="CLU_007265_5_2_10"/>
<dbReference type="InParanoid" id="Q8AAP9"/>
<dbReference type="OrthoDB" id="9804504at2"/>
<dbReference type="UniPathway" id="UPA00140">
    <property type="reaction ID" value="UER00204"/>
</dbReference>
<dbReference type="Proteomes" id="UP000001414">
    <property type="component" value="Chromosome"/>
</dbReference>
<dbReference type="GO" id="GO:0005524">
    <property type="term" value="F:ATP binding"/>
    <property type="evidence" value="ECO:0007669"/>
    <property type="project" value="UniProtKB-KW"/>
</dbReference>
<dbReference type="GO" id="GO:0005525">
    <property type="term" value="F:GTP binding"/>
    <property type="evidence" value="ECO:0007669"/>
    <property type="project" value="UniProtKB-UniRule"/>
</dbReference>
<dbReference type="GO" id="GO:0003924">
    <property type="term" value="F:GTPase activity"/>
    <property type="evidence" value="ECO:0007669"/>
    <property type="project" value="InterPro"/>
</dbReference>
<dbReference type="GO" id="GO:0004781">
    <property type="term" value="F:sulfate adenylyltransferase (ATP) activity"/>
    <property type="evidence" value="ECO:0007669"/>
    <property type="project" value="UniProtKB-UniRule"/>
</dbReference>
<dbReference type="GO" id="GO:0070814">
    <property type="term" value="P:hydrogen sulfide biosynthetic process"/>
    <property type="evidence" value="ECO:0007669"/>
    <property type="project" value="UniProtKB-UniRule"/>
</dbReference>
<dbReference type="GO" id="GO:0000103">
    <property type="term" value="P:sulfate assimilation"/>
    <property type="evidence" value="ECO:0007669"/>
    <property type="project" value="UniProtKB-UniRule"/>
</dbReference>
<dbReference type="GO" id="GO:0006790">
    <property type="term" value="P:sulfur compound metabolic process"/>
    <property type="evidence" value="ECO:0000318"/>
    <property type="project" value="GO_Central"/>
</dbReference>
<dbReference type="CDD" id="cd04166">
    <property type="entry name" value="CysN_ATPS"/>
    <property type="match status" value="1"/>
</dbReference>
<dbReference type="CDD" id="cd03695">
    <property type="entry name" value="CysN_NodQ_II"/>
    <property type="match status" value="1"/>
</dbReference>
<dbReference type="CDD" id="cd04095">
    <property type="entry name" value="CysN_NoDQ_III"/>
    <property type="match status" value="1"/>
</dbReference>
<dbReference type="FunFam" id="2.40.30.10:FF:000027">
    <property type="entry name" value="Sulfate adenylyltransferase subunit 1"/>
    <property type="match status" value="1"/>
</dbReference>
<dbReference type="FunFam" id="2.40.30.10:FF:000179">
    <property type="entry name" value="Sulfate adenylyltransferase subunit 1"/>
    <property type="match status" value="1"/>
</dbReference>
<dbReference type="FunFam" id="3.40.50.300:FF:000119">
    <property type="entry name" value="Sulfate adenylyltransferase subunit 1"/>
    <property type="match status" value="1"/>
</dbReference>
<dbReference type="Gene3D" id="3.40.50.300">
    <property type="entry name" value="P-loop containing nucleotide triphosphate hydrolases"/>
    <property type="match status" value="1"/>
</dbReference>
<dbReference type="Gene3D" id="2.40.30.10">
    <property type="entry name" value="Translation factors"/>
    <property type="match status" value="2"/>
</dbReference>
<dbReference type="HAMAP" id="MF_00062">
    <property type="entry name" value="Sulf_adenylyltr_sub1"/>
    <property type="match status" value="1"/>
</dbReference>
<dbReference type="InterPro" id="IPR041757">
    <property type="entry name" value="CysN_GTP-bd"/>
</dbReference>
<dbReference type="InterPro" id="IPR044138">
    <property type="entry name" value="CysN_II"/>
</dbReference>
<dbReference type="InterPro" id="IPR044139">
    <property type="entry name" value="CysN_NoDQ_III"/>
</dbReference>
<dbReference type="InterPro" id="IPR031157">
    <property type="entry name" value="G_TR_CS"/>
</dbReference>
<dbReference type="InterPro" id="IPR054696">
    <property type="entry name" value="GTP-eEF1A_C"/>
</dbReference>
<dbReference type="InterPro" id="IPR027417">
    <property type="entry name" value="P-loop_NTPase"/>
</dbReference>
<dbReference type="InterPro" id="IPR011779">
    <property type="entry name" value="SO4_adenylTrfase_lsu"/>
</dbReference>
<dbReference type="InterPro" id="IPR000795">
    <property type="entry name" value="T_Tr_GTP-bd_dom"/>
</dbReference>
<dbReference type="InterPro" id="IPR050100">
    <property type="entry name" value="TRAFAC_GTPase_members"/>
</dbReference>
<dbReference type="InterPro" id="IPR009000">
    <property type="entry name" value="Transl_B-barrel_sf"/>
</dbReference>
<dbReference type="InterPro" id="IPR009001">
    <property type="entry name" value="Transl_elong_EF1A/Init_IF2_C"/>
</dbReference>
<dbReference type="NCBIfam" id="TIGR02034">
    <property type="entry name" value="CysN"/>
    <property type="match status" value="1"/>
</dbReference>
<dbReference type="NCBIfam" id="NF003478">
    <property type="entry name" value="PRK05124.1"/>
    <property type="match status" value="1"/>
</dbReference>
<dbReference type="PANTHER" id="PTHR23115">
    <property type="entry name" value="TRANSLATION FACTOR"/>
    <property type="match status" value="1"/>
</dbReference>
<dbReference type="Pfam" id="PF22594">
    <property type="entry name" value="GTP-eEF1A_C"/>
    <property type="match status" value="1"/>
</dbReference>
<dbReference type="Pfam" id="PF00009">
    <property type="entry name" value="GTP_EFTU"/>
    <property type="match status" value="1"/>
</dbReference>
<dbReference type="PRINTS" id="PR00315">
    <property type="entry name" value="ELONGATNFCT"/>
</dbReference>
<dbReference type="SUPFAM" id="SSF50465">
    <property type="entry name" value="EF-Tu/eEF-1alpha/eIF2-gamma C-terminal domain"/>
    <property type="match status" value="1"/>
</dbReference>
<dbReference type="SUPFAM" id="SSF52540">
    <property type="entry name" value="P-loop containing nucleoside triphosphate hydrolases"/>
    <property type="match status" value="1"/>
</dbReference>
<dbReference type="SUPFAM" id="SSF50447">
    <property type="entry name" value="Translation proteins"/>
    <property type="match status" value="1"/>
</dbReference>
<dbReference type="PROSITE" id="PS00301">
    <property type="entry name" value="G_TR_1"/>
    <property type="match status" value="1"/>
</dbReference>
<dbReference type="PROSITE" id="PS51722">
    <property type="entry name" value="G_TR_2"/>
    <property type="match status" value="1"/>
</dbReference>
<organism>
    <name type="scientific">Bacteroides thetaiotaomicron (strain ATCC 29148 / DSM 2079 / JCM 5827 / CCUG 10774 / NCTC 10582 / VPI-5482 / E50)</name>
    <dbReference type="NCBI Taxonomy" id="226186"/>
    <lineage>
        <taxon>Bacteria</taxon>
        <taxon>Pseudomonadati</taxon>
        <taxon>Bacteroidota</taxon>
        <taxon>Bacteroidia</taxon>
        <taxon>Bacteroidales</taxon>
        <taxon>Bacteroidaceae</taxon>
        <taxon>Bacteroides</taxon>
    </lineage>
</organism>
<evidence type="ECO:0000250" key="1"/>
<evidence type="ECO:0000255" key="2">
    <source>
        <dbReference type="HAMAP-Rule" id="MF_00062"/>
    </source>
</evidence>
<comment type="function">
    <text evidence="2">With CysD forms the ATP sulfurylase (ATPS) that catalyzes the adenylation of sulfate producing adenosine 5'-phosphosulfate (APS) and diphosphate, the first enzymatic step in sulfur assimilation pathway. APS synthesis involves the formation of a high-energy phosphoric-sulfuric acid anhydride bond driven by GTP hydrolysis by CysN coupled to ATP hydrolysis by CysD.</text>
</comment>
<comment type="catalytic activity">
    <reaction evidence="2">
        <text>sulfate + ATP + H(+) = adenosine 5'-phosphosulfate + diphosphate</text>
        <dbReference type="Rhea" id="RHEA:18133"/>
        <dbReference type="ChEBI" id="CHEBI:15378"/>
        <dbReference type="ChEBI" id="CHEBI:16189"/>
        <dbReference type="ChEBI" id="CHEBI:30616"/>
        <dbReference type="ChEBI" id="CHEBI:33019"/>
        <dbReference type="ChEBI" id="CHEBI:58243"/>
        <dbReference type="EC" id="2.7.7.4"/>
    </reaction>
</comment>
<comment type="pathway">
    <text evidence="2">Sulfur metabolism; hydrogen sulfide biosynthesis; sulfite from sulfate: step 1/3.</text>
</comment>
<comment type="subunit">
    <text evidence="2">Heterodimer composed of CysD, the smaller subunit, and CysN.</text>
</comment>
<comment type="similarity">
    <text evidence="2">Belongs to the TRAFAC class translation factor GTPase superfamily. Classic translation factor GTPase family. CysN/NodQ subfamily.</text>
</comment>
<protein>
    <recommendedName>
        <fullName evidence="2">Sulfate adenylyltransferase subunit 1</fullName>
        <ecNumber evidence="2">2.7.7.4</ecNumber>
    </recommendedName>
    <alternativeName>
        <fullName evidence="2">ATP-sulfurylase large subunit</fullName>
    </alternativeName>
    <alternativeName>
        <fullName evidence="2">Sulfate adenylate transferase</fullName>
        <shortName evidence="2">SAT</shortName>
    </alternativeName>
</protein>
<sequence length="485" mass="54650">MDNKLDIKAFLDKDEQKDLLRLLTAGSVDDGKSTLIGRLLFDSKKLYEDQLDALERDSKRVGNAGEHIDYALLLDGLKAEREQGITIDVAYRYFSTNGRKFIIADTPGHEQYTRNMITGGSTANLAIILVDARTGVITQTRRHTFLVSLLGIKHVVLAVNKMDLVDFSEERFDEIVSEYKKFVEPLGIPDVNCIPLSALDGDNVVDKSERTPWYKGISLLDFLETVHIDNDHNFTDFRFPVQYVLRPNLDFRGFCGKVASGIVRKGDTVMALPSGKTSKVKSIVTYDGELDYAFPPQSVTLTLEDEIDVSRGEMLVHPDNLPIVDRNFEAMMVWMDEEPMDINKSFFIKQTTNLSRTRIDAIKYKVDVNTMEHLSIDNGQLTKDNLPLQLNQIARVVLTTAKELFFDPYKKNKSCGSFILIDPITNNTSAVGMIIDRVEMKDMAATDDIPVLDLSKLDIAPEHHAAIEKVVKELERQGLSIKVIK</sequence>
<feature type="chain" id="PRO_0000091519" description="Sulfate adenylyltransferase subunit 1">
    <location>
        <begin position="1"/>
        <end position="485"/>
    </location>
</feature>
<feature type="domain" description="tr-type G">
    <location>
        <begin position="17"/>
        <end position="232"/>
    </location>
</feature>
<feature type="region of interest" description="G1" evidence="1">
    <location>
        <begin position="26"/>
        <end position="33"/>
    </location>
</feature>
<feature type="region of interest" description="G2" evidence="1">
    <location>
        <begin position="84"/>
        <end position="88"/>
    </location>
</feature>
<feature type="region of interest" description="G3" evidence="1">
    <location>
        <begin position="105"/>
        <end position="108"/>
    </location>
</feature>
<feature type="region of interest" description="G4" evidence="1">
    <location>
        <begin position="160"/>
        <end position="163"/>
    </location>
</feature>
<feature type="region of interest" description="G5" evidence="1">
    <location>
        <begin position="197"/>
        <end position="199"/>
    </location>
</feature>
<feature type="binding site" evidence="2">
    <location>
        <begin position="26"/>
        <end position="33"/>
    </location>
    <ligand>
        <name>GTP</name>
        <dbReference type="ChEBI" id="CHEBI:37565"/>
    </ligand>
</feature>
<feature type="binding site" evidence="2">
    <location>
        <begin position="105"/>
        <end position="109"/>
    </location>
    <ligand>
        <name>GTP</name>
        <dbReference type="ChEBI" id="CHEBI:37565"/>
    </ligand>
</feature>
<feature type="binding site" evidence="2">
    <location>
        <begin position="160"/>
        <end position="163"/>
    </location>
    <ligand>
        <name>GTP</name>
        <dbReference type="ChEBI" id="CHEBI:37565"/>
    </ligand>
</feature>